<proteinExistence type="inferred from homology"/>
<gene>
    <name evidence="2" type="primary">prfB</name>
    <name type="ordered locus">SAV0754</name>
</gene>
<comment type="function">
    <text evidence="2">Peptide chain release factor 2 directs the termination of translation in response to the peptide chain termination codons UGA and UAA.</text>
</comment>
<comment type="subcellular location">
    <subcellularLocation>
        <location evidence="2">Cytoplasm</location>
    </subcellularLocation>
</comment>
<comment type="PTM">
    <text evidence="2">Methylated by PrmC. Methylation increases the termination efficiency of RF2.</text>
</comment>
<comment type="miscellaneous">
    <text evidence="1">The gene for this protein contains a UGA in-frame termination codon after Leu-24; a naturally occurring frameshift enables complete translation of RF-2. This provides a mechanism for the protein to regulate its own production (By similarity).</text>
</comment>
<comment type="similarity">
    <text evidence="2">Belongs to the prokaryotic/mitochondrial release factor family.</text>
</comment>
<dbReference type="EMBL" id="BA000017">
    <property type="protein sequence ID" value="BAB56916.1"/>
    <property type="status" value="ALT_SEQ"/>
    <property type="molecule type" value="Genomic_DNA"/>
</dbReference>
<dbReference type="SMR" id="Q99VM1"/>
<dbReference type="KEGG" id="sav:SAV0754"/>
<dbReference type="HOGENOM" id="CLU_036856_6_0_9"/>
<dbReference type="Proteomes" id="UP000002481">
    <property type="component" value="Chromosome"/>
</dbReference>
<dbReference type="GO" id="GO:0005737">
    <property type="term" value="C:cytoplasm"/>
    <property type="evidence" value="ECO:0007669"/>
    <property type="project" value="UniProtKB-SubCell"/>
</dbReference>
<dbReference type="GO" id="GO:0016149">
    <property type="term" value="F:translation release factor activity, codon specific"/>
    <property type="evidence" value="ECO:0007669"/>
    <property type="project" value="UniProtKB-UniRule"/>
</dbReference>
<dbReference type="GO" id="GO:0075523">
    <property type="term" value="P:viral translational frameshifting"/>
    <property type="evidence" value="ECO:0007669"/>
    <property type="project" value="UniProtKB-KW"/>
</dbReference>
<dbReference type="FunFam" id="3.30.160.20:FF:000010">
    <property type="entry name" value="Peptide chain release factor 2"/>
    <property type="match status" value="1"/>
</dbReference>
<dbReference type="Gene3D" id="3.30.160.20">
    <property type="match status" value="1"/>
</dbReference>
<dbReference type="Gene3D" id="3.30.70.1660">
    <property type="match status" value="1"/>
</dbReference>
<dbReference type="Gene3D" id="1.20.58.410">
    <property type="entry name" value="Release factor"/>
    <property type="match status" value="1"/>
</dbReference>
<dbReference type="HAMAP" id="MF_00094">
    <property type="entry name" value="Rel_fac_2"/>
    <property type="match status" value="1"/>
</dbReference>
<dbReference type="InterPro" id="IPR005139">
    <property type="entry name" value="PCRF"/>
</dbReference>
<dbReference type="InterPro" id="IPR000352">
    <property type="entry name" value="Pep_chain_release_fac_I"/>
</dbReference>
<dbReference type="InterPro" id="IPR045853">
    <property type="entry name" value="Pep_chain_release_fac_I_sf"/>
</dbReference>
<dbReference type="InterPro" id="IPR004374">
    <property type="entry name" value="PrfB"/>
</dbReference>
<dbReference type="NCBIfam" id="TIGR00020">
    <property type="entry name" value="prfB"/>
    <property type="match status" value="1"/>
</dbReference>
<dbReference type="PANTHER" id="PTHR43116:SF3">
    <property type="entry name" value="CLASS I PEPTIDE CHAIN RELEASE FACTOR"/>
    <property type="match status" value="1"/>
</dbReference>
<dbReference type="PANTHER" id="PTHR43116">
    <property type="entry name" value="PEPTIDE CHAIN RELEASE FACTOR 2"/>
    <property type="match status" value="1"/>
</dbReference>
<dbReference type="Pfam" id="PF03462">
    <property type="entry name" value="PCRF"/>
    <property type="match status" value="1"/>
</dbReference>
<dbReference type="Pfam" id="PF00472">
    <property type="entry name" value="RF-1"/>
    <property type="match status" value="1"/>
</dbReference>
<dbReference type="SMART" id="SM00937">
    <property type="entry name" value="PCRF"/>
    <property type="match status" value="1"/>
</dbReference>
<dbReference type="SUPFAM" id="SSF75620">
    <property type="entry name" value="Release factor"/>
    <property type="match status" value="1"/>
</dbReference>
<dbReference type="PROSITE" id="PS00745">
    <property type="entry name" value="RF_PROK_I"/>
    <property type="match status" value="1"/>
</dbReference>
<organism>
    <name type="scientific">Staphylococcus aureus (strain Mu50 / ATCC 700699)</name>
    <dbReference type="NCBI Taxonomy" id="158878"/>
    <lineage>
        <taxon>Bacteria</taxon>
        <taxon>Bacillati</taxon>
        <taxon>Bacillota</taxon>
        <taxon>Bacilli</taxon>
        <taxon>Bacillales</taxon>
        <taxon>Staphylococcaceae</taxon>
        <taxon>Staphylococcus</taxon>
    </lineage>
</organism>
<evidence type="ECO:0000250" key="1"/>
<evidence type="ECO:0000255" key="2">
    <source>
        <dbReference type="HAMAP-Rule" id="MF_00094"/>
    </source>
</evidence>
<feature type="chain" id="PRO_0000166846" description="Peptide chain release factor 2">
    <location>
        <begin position="1"/>
        <end position="369"/>
    </location>
</feature>
<feature type="modified residue" description="N5-methylglutamine" evidence="2">
    <location>
        <position position="252"/>
    </location>
</feature>
<sequence>MELSEIKRNIDKYNQDLTQIRGSLDLENKETNIQEYEEMMAEPNFWDNQTKAQDIIDKNNALKAIVNGYKTLQAEVDDMDATWDLLQEEFDEEMKEDLEQEVINFKAKVDEYELQLLLDGPHDANNAILELHPGAGGTESQDWANMLFRMYQRYCEKKGFKVETVDYLPGDEAGIKSVTLLIKGHNAYGYLKAEKGVHRLVRISPFDSSGRRHTSFASCDVIPDFNNDEIEIEINPDDITVDTFRASGAGGQHINKTESAIRITHHPSGIVVNNQNERSQIKNREAAMKMLKSKLYQLKLEEQAREMAEIRGEQKEIGWGSQIRSYVFHPYSMVKDHRTNEETGKVDAVMDGDIGPFIESYLRQTMSHD</sequence>
<accession>Q99VM1</accession>
<name>RF2_STAAM</name>
<keyword id="KW-0963">Cytoplasm</keyword>
<keyword id="KW-0488">Methylation</keyword>
<keyword id="KW-0648">Protein biosynthesis</keyword>
<keyword id="KW-0688">Ribosomal frameshifting</keyword>
<reference key="1">
    <citation type="journal article" date="2001" name="Lancet">
        <title>Whole genome sequencing of meticillin-resistant Staphylococcus aureus.</title>
        <authorList>
            <person name="Kuroda M."/>
            <person name="Ohta T."/>
            <person name="Uchiyama I."/>
            <person name="Baba T."/>
            <person name="Yuzawa H."/>
            <person name="Kobayashi I."/>
            <person name="Cui L."/>
            <person name="Oguchi A."/>
            <person name="Aoki K."/>
            <person name="Nagai Y."/>
            <person name="Lian J.-Q."/>
            <person name="Ito T."/>
            <person name="Kanamori M."/>
            <person name="Matsumaru H."/>
            <person name="Maruyama A."/>
            <person name="Murakami H."/>
            <person name="Hosoyama A."/>
            <person name="Mizutani-Ui Y."/>
            <person name="Takahashi N.K."/>
            <person name="Sawano T."/>
            <person name="Inoue R."/>
            <person name="Kaito C."/>
            <person name="Sekimizu K."/>
            <person name="Hirakawa H."/>
            <person name="Kuhara S."/>
            <person name="Goto S."/>
            <person name="Yabuzaki J."/>
            <person name="Kanehisa M."/>
            <person name="Yamashita A."/>
            <person name="Oshima K."/>
            <person name="Furuya K."/>
            <person name="Yoshino C."/>
            <person name="Shiba T."/>
            <person name="Hattori M."/>
            <person name="Ogasawara N."/>
            <person name="Hayashi H."/>
            <person name="Hiramatsu K."/>
        </authorList>
    </citation>
    <scope>NUCLEOTIDE SEQUENCE [LARGE SCALE GENOMIC DNA]</scope>
    <source>
        <strain>Mu50 / ATCC 700699</strain>
    </source>
</reference>
<protein>
    <recommendedName>
        <fullName evidence="2">Peptide chain release factor 2</fullName>
        <shortName evidence="2">RF-2</shortName>
    </recommendedName>
</protein>